<sequence length="2079" mass="227696">MKTGHRTVLLFGDVTDPWIEGIDHVYVQAAKKPWIRSFLEDLFSAIKTETKAMDRVLQEGFKDSSSFQELAERYRHAGDDFGMAHAMMIYAIRAVVLLETLSREPHILDESRPRPEVIGISGGLFSAAVMSISINFETLYAACIEAGRVWSRLCNLTLVRSRAMEESPGTWGWAILGIPAADLGKTLEQFQSSMGIHCSKRAKVGVIGDRWSTVIGPPSVLELTLSECPNLKNLPKDELNIHALQHTLSVSNSDIDYIVGNSPLLETPLPPGYRIHGLDDDFPEANYAEWRHLLRASAYQTLSRPLDIVQAVSNLNAALGVSKDIDAKIIGPSSHTTYLVKCLQTAGKEVLIQNGFPASPQTSGTNDGIAIVGMAGKGPGSDDLEEFWNVILKGLDLHEEVPSDRFNLEEYYSPKHPPAGPGRCTMTCRHGCFMNNPGHFDSKFFHISPREAMLMDPAHRLFLMNAYEALEMAGYSNGQTKSTNPTKIATFFGQCNDDWHVVGHRALGCDAYTLQAVQRAFGPGRLAFQFNWEGPTYALDSACAATSSCIHLACMSLITRDIDMAVAGAANVLSTPHSFTSLSRSGVLSDSGNCKTYRDDADGYCRADFSGAVVLKRLDDAIAQNDNILAVISSSARNHSGNSTSITTSDAAAQERLFQKVLRNARVTPQDISYVEMHGTGTQVGDKAEIGAVSSVFSKRIDGRPLNVGAIKANIGHSEAAAGMSSLLKSILMFQNSTIPPQAGMPHTLNPNFPPLHEINIQIPSEPLEFKTTDNKPRRILLNNFDAAGGNACLLLEDYTDTKERNADVRSAHTIVMSARTQSSQLLNKKRLLRWLRSKPNTRVEDLAYTTTARRMHHPIRSAIIASTTQEVIAKLEAEIERNDSSLVQRASPLVFVFTGQGSHYGGMGSELYGSSPIFRERVDLCASICAGYDFPPFLDIITNETVNVSTKNASQVQLAVLTLEMALTHFWRSAGIEPTMVIGHSLGEYAALHAAGVLSLADALYLVGHRSLLLLERCESDSCSMLSVSMSVDEVQAQLTRIRSSCNVACINSSTSTVVSGTAEDLAEFQSSITAQNAKVRAKKLSLPFAFHSFQMDPILEDYSRIAAGVTYSAPKIPVASTLLGSVVNREGIFTQEYMVQQTRQAADFMGGLVAVKSELADPLWLEVGPAPVCMSFVRDTLSTPASKMTHSLQPKTSNWMSLSKTLAAMYTSGVDIDWLAFHAPYESDLKLLTLPSYAWDVRNFWITHTDNATEVVSEQSPVTSSEPLISTCAQYLVAKSSSPNIRVALRASIADPGFMGLMDGHKMQGIGLCSGSVFCEAAFAATKYALEYSGRKNITQPWLTLHDPKLLLPLTKKSVGPDGDLVTTAVMYSSSAETISITFQVTSASASYDLGTCVVKVRDPTRSQVEWDRISYFIKARMDETIKNAKEGRGHRMQPEVFYALFGNAVEFAPDFQGINEAYIAKDFQEAAAVVTLPHDPSGTRFTFSPYWGEALVHLAGFMVNGNPSKSPKTTFIVMGFASVEQTAPLIPGKQYMTYTRISKWVKDTAYCDAIVFDPESFTIVLQCVDIRYQELPRATWKHVLEGPHETPIVHAQRPPVRNSKKYVETRELQQPSSATVPAQETTIDEPEQQEGEPAAGARLFNAILDSISKATGTDPSEFRDDTMIADLGVDSIMAIEVVATVKDVSGLELPAAFVFEYPTIGDLRKEFRANEPTVENPRFSATPSSAEASIPSSPSSLAHPMSDSASSLSPSDREEALPLERQSMTKREQKRPVKIDDDASPEPVVRIMLLQGRPGSKRIPFYMMADGTGTIATYIHLPPFKSKMPVYGIDSPFLRCPKRLTKEVGIEGVAKLIVDALMKTQPEGPLMIGGFSAGSIVAYEVCRQLGRAGRQVEGLVLIDMCCPRSSLLDEDKMNSEDDASFAIFESAVTKDGLWSSSETTQQHFRAYHVAMHAYHPPYMLEEERPTRTAVIWAEKGMVNRVMGNEKLMKMLVEQGIPMTSYPGYMEDPKLGAFACLVPDRTKADLGPNGWEKYTAGEVLTLSVAGDHLDLPMPGHVHLLHAQMEKAFAYIKG</sequence>
<accession>A0A0N7D745</accession>
<proteinExistence type="evidence at transcript level"/>
<comment type="function">
    <text evidence="9">Highly reducing polyketide synthase; part of the gene cluster that mediates the biosynthesis of 10,11-dehydrocurvularin, a prevalent fungal phytotoxin with heat shock response and immune-modulatory activities (PubMed:26493380). The highly reducing polyketide synthase Dhc3 is responsible for biosynthesis up to the tetraketide stage (PubMed:26493380). The non-reducing polyketide synthase Dhc5 then conducts four additional chain extension cycles, producing the unreduced part of the nascent octaketide from C-1 to C-8 in 10,11-dehydrocurvularin (PubMed:26493380).</text>
</comment>
<comment type="pathway">
    <text evidence="11">Mycotoxin biosynthesis.</text>
</comment>
<comment type="domain">
    <text evidence="2">Multidomain protein; including a starter unit:ACP transacylase (SAT) that selects the starter unit; a ketosynthase (KS) that catalyzes repeated decarboxylative condensation to elongate the polyketide backbone; a malonyl-CoA:ACP transacylase (MAT) that selects and transfers the extender unit malonyl-CoA; a product template (PT) domain that controls the immediate cyclization regioselectivity of the reactive polyketide backbone; and an acyl-carrier protein (ACP) that serves as the tether of the growing and completed polyketide via its phosphopantetheinyl arm (By similarity).</text>
</comment>
<comment type="domain">
    <text evidence="1">The release of the polyketide chain from the non-reducing polyketide synthase is mediated by the thioesterase (TE) domain localized at the C-ter of the protein (By similarity).</text>
</comment>
<gene>
    <name evidence="10" type="primary">Dhc5</name>
</gene>
<name>DHC5_ALTCI</name>
<organism>
    <name type="scientific">Alternaria cinerariae</name>
    <dbReference type="NCBI Taxonomy" id="216837"/>
    <lineage>
        <taxon>Eukaryota</taxon>
        <taxon>Fungi</taxon>
        <taxon>Dikarya</taxon>
        <taxon>Ascomycota</taxon>
        <taxon>Pezizomycotina</taxon>
        <taxon>Dothideomycetes</taxon>
        <taxon>Pleosporomycetidae</taxon>
        <taxon>Pleosporales</taxon>
        <taxon>Pleosporineae</taxon>
        <taxon>Pleosporaceae</taxon>
        <taxon>Alternaria</taxon>
        <taxon>Alternaria sect. Sonchi</taxon>
    </lineage>
</organism>
<protein>
    <recommendedName>
        <fullName evidence="10">Non-reducing polyketide synthase Dhc5</fullName>
        <ecNumber evidence="9">2.3.1.-</ecNumber>
    </recommendedName>
    <alternativeName>
        <fullName evidence="10">Dehydrocurvularin biosynthesis protein 5</fullName>
    </alternativeName>
</protein>
<evidence type="ECO:0000250" key="1">
    <source>
        <dbReference type="UniProtKB" id="Q5ATJ7"/>
    </source>
</evidence>
<evidence type="ECO:0000250" key="2">
    <source>
        <dbReference type="UniProtKB" id="Q5B0D0"/>
    </source>
</evidence>
<evidence type="ECO:0000255" key="3"/>
<evidence type="ECO:0000255" key="4">
    <source>
        <dbReference type="PROSITE-ProRule" id="PRU00258"/>
    </source>
</evidence>
<evidence type="ECO:0000255" key="5">
    <source>
        <dbReference type="PROSITE-ProRule" id="PRU01348"/>
    </source>
</evidence>
<evidence type="ECO:0000255" key="6">
    <source>
        <dbReference type="PROSITE-ProRule" id="PRU01363"/>
    </source>
</evidence>
<evidence type="ECO:0000255" key="7">
    <source>
        <dbReference type="PROSITE-ProRule" id="PRU10022"/>
    </source>
</evidence>
<evidence type="ECO:0000256" key="8">
    <source>
        <dbReference type="SAM" id="MobiDB-lite"/>
    </source>
</evidence>
<evidence type="ECO:0000269" key="9">
    <source>
    </source>
</evidence>
<evidence type="ECO:0000303" key="10">
    <source>
    </source>
</evidence>
<evidence type="ECO:0000305" key="11">
    <source>
    </source>
</evidence>
<dbReference type="EC" id="2.3.1.-" evidence="9"/>
<dbReference type="EMBL" id="KT271474">
    <property type="protein sequence ID" value="AKQ49203.1"/>
    <property type="molecule type" value="mRNA"/>
</dbReference>
<dbReference type="SMR" id="A0A0N7D745"/>
<dbReference type="ESTHER" id="altci-dhc5">
    <property type="family name" value="Thioesterase"/>
</dbReference>
<dbReference type="GO" id="GO:0004315">
    <property type="term" value="F:3-oxoacyl-[acyl-carrier-protein] synthase activity"/>
    <property type="evidence" value="ECO:0007669"/>
    <property type="project" value="InterPro"/>
</dbReference>
<dbReference type="GO" id="GO:0004312">
    <property type="term" value="F:fatty acid synthase activity"/>
    <property type="evidence" value="ECO:0007669"/>
    <property type="project" value="TreeGrafter"/>
</dbReference>
<dbReference type="GO" id="GO:0031177">
    <property type="term" value="F:phosphopantetheine binding"/>
    <property type="evidence" value="ECO:0007669"/>
    <property type="project" value="InterPro"/>
</dbReference>
<dbReference type="GO" id="GO:0006633">
    <property type="term" value="P:fatty acid biosynthetic process"/>
    <property type="evidence" value="ECO:0007669"/>
    <property type="project" value="InterPro"/>
</dbReference>
<dbReference type="GO" id="GO:0044550">
    <property type="term" value="P:secondary metabolite biosynthetic process"/>
    <property type="evidence" value="ECO:0007669"/>
    <property type="project" value="TreeGrafter"/>
</dbReference>
<dbReference type="CDD" id="cd00833">
    <property type="entry name" value="PKS"/>
    <property type="match status" value="1"/>
</dbReference>
<dbReference type="Gene3D" id="3.30.70.3290">
    <property type="match status" value="1"/>
</dbReference>
<dbReference type="Gene3D" id="3.40.47.10">
    <property type="match status" value="1"/>
</dbReference>
<dbReference type="Gene3D" id="1.10.1200.10">
    <property type="entry name" value="ACP-like"/>
    <property type="match status" value="1"/>
</dbReference>
<dbReference type="Gene3D" id="3.40.50.1820">
    <property type="entry name" value="alpha/beta hydrolase"/>
    <property type="match status" value="1"/>
</dbReference>
<dbReference type="Gene3D" id="3.30.70.250">
    <property type="entry name" value="Malonyl-CoA ACP transacylase, ACP-binding"/>
    <property type="match status" value="1"/>
</dbReference>
<dbReference type="Gene3D" id="3.40.366.10">
    <property type="entry name" value="Malonyl-Coenzyme A Acyl Carrier Protein, domain 2"/>
    <property type="match status" value="1"/>
</dbReference>
<dbReference type="Gene3D" id="3.10.129.110">
    <property type="entry name" value="Polyketide synthase dehydratase"/>
    <property type="match status" value="1"/>
</dbReference>
<dbReference type="InterPro" id="IPR029058">
    <property type="entry name" value="AB_hydrolase_fold"/>
</dbReference>
<dbReference type="InterPro" id="IPR001227">
    <property type="entry name" value="Ac_transferase_dom_sf"/>
</dbReference>
<dbReference type="InterPro" id="IPR036736">
    <property type="entry name" value="ACP-like_sf"/>
</dbReference>
<dbReference type="InterPro" id="IPR014043">
    <property type="entry name" value="Acyl_transferase_dom"/>
</dbReference>
<dbReference type="InterPro" id="IPR016035">
    <property type="entry name" value="Acyl_Trfase/lysoPLipase"/>
</dbReference>
<dbReference type="InterPro" id="IPR018201">
    <property type="entry name" value="Ketoacyl_synth_AS"/>
</dbReference>
<dbReference type="InterPro" id="IPR014031">
    <property type="entry name" value="Ketoacyl_synth_C"/>
</dbReference>
<dbReference type="InterPro" id="IPR014030">
    <property type="entry name" value="Ketoacyl_synth_N"/>
</dbReference>
<dbReference type="InterPro" id="IPR016036">
    <property type="entry name" value="Malonyl_transacylase_ACP-bd"/>
</dbReference>
<dbReference type="InterPro" id="IPR020841">
    <property type="entry name" value="PKS_Beta-ketoAc_synthase_dom"/>
</dbReference>
<dbReference type="InterPro" id="IPR042104">
    <property type="entry name" value="PKS_dehydratase_sf"/>
</dbReference>
<dbReference type="InterPro" id="IPR049900">
    <property type="entry name" value="PKS_mFAS_DH"/>
</dbReference>
<dbReference type="InterPro" id="IPR050091">
    <property type="entry name" value="PKS_NRPS_Biosynth_Enz"/>
</dbReference>
<dbReference type="InterPro" id="IPR020806">
    <property type="entry name" value="PKS_PP-bd"/>
</dbReference>
<dbReference type="InterPro" id="IPR020802">
    <property type="entry name" value="PKS_thioesterase"/>
</dbReference>
<dbReference type="InterPro" id="IPR009081">
    <property type="entry name" value="PP-bd_ACP"/>
</dbReference>
<dbReference type="InterPro" id="IPR006162">
    <property type="entry name" value="Ppantetheine_attach_site"/>
</dbReference>
<dbReference type="InterPro" id="IPR030918">
    <property type="entry name" value="PT_fungal_PKS"/>
</dbReference>
<dbReference type="InterPro" id="IPR032088">
    <property type="entry name" value="SAT"/>
</dbReference>
<dbReference type="InterPro" id="IPR001031">
    <property type="entry name" value="Thioesterase"/>
</dbReference>
<dbReference type="InterPro" id="IPR016039">
    <property type="entry name" value="Thiolase-like"/>
</dbReference>
<dbReference type="NCBIfam" id="TIGR04532">
    <property type="entry name" value="PT_fungal_PKS"/>
    <property type="match status" value="1"/>
</dbReference>
<dbReference type="PANTHER" id="PTHR43775">
    <property type="entry name" value="FATTY ACID SYNTHASE"/>
    <property type="match status" value="1"/>
</dbReference>
<dbReference type="PANTHER" id="PTHR43775:SF37">
    <property type="entry name" value="SI:DKEY-61P9.11"/>
    <property type="match status" value="1"/>
</dbReference>
<dbReference type="Pfam" id="PF00698">
    <property type="entry name" value="Acyl_transf_1"/>
    <property type="match status" value="1"/>
</dbReference>
<dbReference type="Pfam" id="PF22621">
    <property type="entry name" value="CurL-like_PKS_C"/>
    <property type="match status" value="1"/>
</dbReference>
<dbReference type="Pfam" id="PF00109">
    <property type="entry name" value="ketoacyl-synt"/>
    <property type="match status" value="1"/>
</dbReference>
<dbReference type="Pfam" id="PF02801">
    <property type="entry name" value="Ketoacyl-synt_C"/>
    <property type="match status" value="1"/>
</dbReference>
<dbReference type="Pfam" id="PF00550">
    <property type="entry name" value="PP-binding"/>
    <property type="match status" value="1"/>
</dbReference>
<dbReference type="Pfam" id="PF16073">
    <property type="entry name" value="SAT"/>
    <property type="match status" value="1"/>
</dbReference>
<dbReference type="Pfam" id="PF00975">
    <property type="entry name" value="Thioesterase"/>
    <property type="match status" value="1"/>
</dbReference>
<dbReference type="SMART" id="SM00827">
    <property type="entry name" value="PKS_AT"/>
    <property type="match status" value="1"/>
</dbReference>
<dbReference type="SMART" id="SM00825">
    <property type="entry name" value="PKS_KS"/>
    <property type="match status" value="1"/>
</dbReference>
<dbReference type="SMART" id="SM00823">
    <property type="entry name" value="PKS_PP"/>
    <property type="match status" value="1"/>
</dbReference>
<dbReference type="SMART" id="SM01294">
    <property type="entry name" value="PKS_PP_betabranch"/>
    <property type="match status" value="1"/>
</dbReference>
<dbReference type="SMART" id="SM00824">
    <property type="entry name" value="PKS_TE"/>
    <property type="match status" value="1"/>
</dbReference>
<dbReference type="SUPFAM" id="SSF47336">
    <property type="entry name" value="ACP-like"/>
    <property type="match status" value="1"/>
</dbReference>
<dbReference type="SUPFAM" id="SSF53474">
    <property type="entry name" value="alpha/beta-Hydrolases"/>
    <property type="match status" value="1"/>
</dbReference>
<dbReference type="SUPFAM" id="SSF52151">
    <property type="entry name" value="FabD/lysophospholipase-like"/>
    <property type="match status" value="1"/>
</dbReference>
<dbReference type="SUPFAM" id="SSF55048">
    <property type="entry name" value="Probable ACP-binding domain of malonyl-CoA ACP transacylase"/>
    <property type="match status" value="1"/>
</dbReference>
<dbReference type="SUPFAM" id="SSF53901">
    <property type="entry name" value="Thiolase-like"/>
    <property type="match status" value="1"/>
</dbReference>
<dbReference type="PROSITE" id="PS50075">
    <property type="entry name" value="CARRIER"/>
    <property type="match status" value="1"/>
</dbReference>
<dbReference type="PROSITE" id="PS00606">
    <property type="entry name" value="KS3_1"/>
    <property type="match status" value="1"/>
</dbReference>
<dbReference type="PROSITE" id="PS52004">
    <property type="entry name" value="KS3_2"/>
    <property type="match status" value="1"/>
</dbReference>
<dbReference type="PROSITE" id="PS00012">
    <property type="entry name" value="PHOSPHOPANTETHEINE"/>
    <property type="match status" value="1"/>
</dbReference>
<dbReference type="PROSITE" id="PS52019">
    <property type="entry name" value="PKS_MFAS_DH"/>
    <property type="match status" value="1"/>
</dbReference>
<feature type="chain" id="PRO_0000438390" description="Non-reducing polyketide synthase Dhc5">
    <location>
        <begin position="1"/>
        <end position="2079"/>
    </location>
</feature>
<feature type="domain" description="Ketosynthase family 3 (KS3)" evidence="5 11">
    <location>
        <begin position="366"/>
        <end position="798"/>
    </location>
</feature>
<feature type="domain" description="PKS/mFAS DH" evidence="6">
    <location>
        <begin position="1268"/>
        <end position="1584"/>
    </location>
</feature>
<feature type="domain" description="Carrier" evidence="4">
    <location>
        <begin position="1641"/>
        <end position="1718"/>
    </location>
</feature>
<feature type="region of interest" description="N-terminal acylcarrier protein transacylase domain (SAT)" evidence="3 11">
    <location>
        <begin position="9"/>
        <end position="246"/>
    </location>
</feature>
<feature type="region of interest" description="Malonyl-CoA:ACP transacylase (MAT) domain" evidence="3 11">
    <location>
        <begin position="895"/>
        <end position="1199"/>
    </location>
</feature>
<feature type="region of interest" description="N-terminal hotdog fold" evidence="6">
    <location>
        <begin position="1268"/>
        <end position="1414"/>
    </location>
</feature>
<feature type="region of interest" description="Product template (PT) domain" evidence="3 11">
    <location>
        <begin position="1304"/>
        <end position="1581"/>
    </location>
</feature>
<feature type="region of interest" description="C-terminal hotdog fold" evidence="6">
    <location>
        <begin position="1435"/>
        <end position="1584"/>
    </location>
</feature>
<feature type="region of interest" description="Disordered" evidence="8">
    <location>
        <begin position="1613"/>
        <end position="1639"/>
    </location>
</feature>
<feature type="region of interest" description="Disordered" evidence="8">
    <location>
        <begin position="1721"/>
        <end position="1784"/>
    </location>
</feature>
<feature type="region of interest" description="Thioesterase (TE) domain" evidence="3 11">
    <location>
        <begin position="1812"/>
        <end position="2057"/>
    </location>
</feature>
<feature type="compositionally biased region" description="Polar residues" evidence="8">
    <location>
        <begin position="1615"/>
        <end position="1628"/>
    </location>
</feature>
<feature type="compositionally biased region" description="Low complexity" evidence="8">
    <location>
        <begin position="1727"/>
        <end position="1757"/>
    </location>
</feature>
<feature type="compositionally biased region" description="Basic and acidic residues" evidence="8">
    <location>
        <begin position="1758"/>
        <end position="1784"/>
    </location>
</feature>
<feature type="active site" description="For beta-ketoacyl synthase activity" evidence="5">
    <location>
        <position position="543"/>
    </location>
</feature>
<feature type="active site" description="For beta-ketoacyl synthase activity" evidence="5">
    <location>
        <position position="678"/>
    </location>
</feature>
<feature type="active site" description="For beta-ketoacyl synthase activity" evidence="5">
    <location>
        <position position="717"/>
    </location>
</feature>
<feature type="active site" description="For acyl/malonyl transferase activity" evidence="7">
    <location>
        <position position="986"/>
    </location>
</feature>
<feature type="active site" description="For thioesterase activity" evidence="1">
    <location>
        <position position="2064"/>
    </location>
</feature>
<feature type="modified residue" description="O-(pantetheine 4'-phosphoryl)serine" evidence="4">
    <location>
        <position position="1678"/>
    </location>
</feature>
<reference key="1">
    <citation type="journal article" date="2015" name="ChemBioChem">
        <title>Comparison of 10,11-dehydrocurvularin polyketide synthases from Alternaria cinerariae and Aspergillus terreus highlights key structural motifs.</title>
        <authorList>
            <person name="Cochrane R.V."/>
            <person name="Gao Z."/>
            <person name="Lambkin G.R."/>
            <person name="Xu W."/>
            <person name="Winter J.M."/>
            <person name="Marcus S.L."/>
            <person name="Tang Y."/>
            <person name="Vederas J.C."/>
        </authorList>
    </citation>
    <scope>NUCLEOTIDE SEQUENCE [MRNA]</scope>
    <scope>DOMAIN</scope>
    <scope>FUNCTION</scope>
    <scope>PATHWAY</scope>
    <source>
        <strain>ATCC 11784</strain>
    </source>
</reference>
<reference key="2">
    <citation type="submission" date="2015-07" db="EMBL/GenBank/DDBJ databases">
        <authorList>
            <person name="Cajimat M.N.B."/>
            <person name="Milazzo M.L."/>
            <person name="Fulhorst C.F."/>
        </authorList>
    </citation>
    <scope>NUCLEOTIDE SEQUENCE [MRNA]</scope>
    <source>
        <strain>ATCC 11784</strain>
    </source>
</reference>
<keyword id="KW-0511">Multifunctional enzyme</keyword>
<keyword id="KW-0596">Phosphopantetheine</keyword>
<keyword id="KW-0597">Phosphoprotein</keyword>
<keyword id="KW-0808">Transferase</keyword>